<comment type="function">
    <text evidence="2 5 6 7 8">Key regulator of TP53BP1 that plays a key role in the repair of double-strand DNA breaks (DSBs) in response to DNA damage: acts by promoting non-homologous end joining (NHEJ)-mediated repair of DSBs (PubMed:23306437, PubMed:23306439, PubMed:23333305). In response to DNA damage, interacts with ATM-phosphorylated TP53BP1 (PubMed:23306437, PubMed:23306439, PubMed:23333305). Interaction with TP53BP1 leads to dissociate the interaction between NUDT16L1/TIRR and TP53BP1, thereby unmasking the tandem Tudor-like domain of TP53BP1 and allowing recruitment to DNA DSBs (By similarity). Once recruited to DSBs, RIF1 and TP53BP1 act by promoting NHEJ-mediated repair of DSBs (PubMed:23306437, PubMed:23333305). In the same time, RIF1 and TP53BP1 specifically counteract the function of BRCA1 by blocking DSBs resection via homologous recombination (HR) during G1 phase (PubMed:23306437, PubMed:23333305). Also required for immunoglobulin class-switch recombination (CSR) during antibody genesis, a process that involves the generation of DNA DSBs (PubMed:23306439, PubMed:23333305, PubMed:23333306). Promotes NHEJ of dysfunctional telomeres (PubMed:23333305).</text>
</comment>
<comment type="subunit">
    <text evidence="2 5 6 7 12">Interacts with TP53BP1 (when phosphorylated by ATM) (PubMed:23306437, PubMed:23306439, PubMed:23333305). May interact with TRF2 (PubMed:15042697). Interacts with SHLD2 (By similarity). Interacts with ERCC6 (via WHD region) (By similarity). Interacts with ASTE1 (By similarity).</text>
</comment>
<comment type="interaction">
    <interactant intactId="EBI-2312621">
        <id>Q6PR54</id>
    </interactant>
    <interactant intactId="EBI-2312517">
        <id>Q80Z64</id>
        <label>Nanog</label>
    </interactant>
    <organismsDiffer>false</organismsDiffer>
    <experiments>5</experiments>
</comment>
<comment type="interaction">
    <interactant intactId="EBI-2312621">
        <id>Q6PR54</id>
    </interactant>
    <interactant intactId="EBI-2312665">
        <id>Q61066</id>
        <label>Nr0b1</label>
    </interactant>
    <organismsDiffer>false</organismsDiffer>
    <experiments>2</experiments>
</comment>
<comment type="subcellular location">
    <subcellularLocation>
        <location evidence="4">Nucleus</location>
    </subcellularLocation>
    <subcellularLocation>
        <location evidence="5 6 7">Chromosome</location>
    </subcellularLocation>
    <subcellularLocation>
        <location evidence="4">Chromosome</location>
        <location evidence="4">Telomere</location>
    </subcellularLocation>
    <subcellularLocation>
        <location evidence="2">Cytoplasm</location>
        <location evidence="2">Cytoskeleton</location>
        <location evidence="2">Spindle</location>
    </subcellularLocation>
    <text evidence="2 4 5 6 7">Exhibits ATM- and TP53BP1-dependent localization to uncapped or aberrant telomeres and to DNA double strand breaks (DSBs). Following interaction with TP53BP1, recruited to sites of DNA damage, such as DSBs (PubMed:23306437, PubMed:23306439, PubMed:23333305). Localizes to microtubules of the midzone of the mitotic spindle during anaphase, and to condensed chromosomes in telophase (By similarity). While the majority of the protein appears nuclear and distinct from normal telomere structures, a small fraction may bind to telomeres in embryonic stem cells (PubMed:15042697).</text>
</comment>
<comment type="alternative products">
    <event type="alternative splicing"/>
    <isoform>
        <id>Q6PR54-1</id>
        <name>1</name>
        <sequence type="displayed"/>
    </isoform>
    <isoform>
        <id>Q6PR54-2</id>
        <name>2</name>
        <sequence type="described" ref="VSP_014433"/>
    </isoform>
    <isoform>
        <id>Q6PR54-3</id>
        <name>3</name>
        <sequence type="described" ref="VSP_014432"/>
    </isoform>
</comment>
<comment type="tissue specificity">
    <text evidence="4">Expressed in Sertoli cells, prospermatagonia, early primary spermatocytes, and in oocytes at all stages of their growth. Expressed in embryonic stem (ES) and embryonic germ (EG) cells: expression is lost upon differentiation.</text>
</comment>
<comment type="developmental stage">
    <text evidence="4">Found in the nucleus of germinal-vesicle (GV) stage oocytes prior to fertilization. Accumulates in the male and female pronucleus after fertilization. Expressed in the nuclei of all blastomeres from the two cell stage to the compacted morula stage, although absent from the polar body and inner cell mass (ICM). Found in the nuclei of polar and mural trophectoderm cells from 3.5 dpc, and at high levels in the epiblast from 5.5 dpc to 7.5 dpc. Expressed by primitive germ cells (PGCs) in both male and female from 9.5 dpc to 13.5 dpc, at which point expression declines. A low level is observed in Sertoli cells of the testis at 17.5 dpc.</text>
</comment>
<comment type="disruption phenotype">
    <text evidence="7">Embryonic lethality in inbred 129/Ola and outbred MF1 mouse strains: 7.5 dpc embryos display significant developmental retardation (PubMed:23333305). Female-specific lethality in a CD1 strain background, while males survive (PubMed:23333305). Surviving males grow normally, are fertile, but are subject to infections due to defects in the immune response (PubMed:23333305). Surviving males are severely compromised for TP53BP1-dependent class-switch recombination (CSR) and fusion of dysfunctional telomeres (PubMed:23333305).</text>
</comment>
<comment type="miscellaneous">
    <molecule>Isoform 3</molecule>
    <text evidence="11">May be due to a competing acceptor splice site.</text>
</comment>
<comment type="similarity">
    <text evidence="11">Belongs to the RIF1 family.</text>
</comment>
<comment type="sequence caution" evidence="11">
    <conflict type="erroneous initiation">
        <sequence resource="EMBL-CDS" id="BAB30843"/>
    </conflict>
    <text>Truncated N-terminus.</text>
</comment>
<comment type="sequence caution" evidence="11">
    <conflict type="miscellaneous discrepancy">
        <sequence resource="EMBL-CDS" id="BAC38846"/>
    </conflict>
    <text>Chimeric cDNA.</text>
</comment>
<comment type="sequence caution" evidence="11">
    <conflict type="miscellaneous discrepancy">
        <sequence resource="EMBL-CDS" id="BAC40506"/>
    </conflict>
    <text>Intron retention.</text>
</comment>
<proteinExistence type="evidence at protein level"/>
<protein>
    <recommendedName>
        <fullName evidence="11">Telomere-associated protein RIF1</fullName>
    </recommendedName>
    <alternativeName>
        <fullName evidence="12">Rap1-interacting factor 1 homolog</fullName>
        <shortName evidence="9">mRif1</shortName>
    </alternativeName>
</protein>
<sequence>MTAPGRSPLEPLLETWEDPSVPPGEQTDAYLTLTSRMTGEEGKEVIAEIEKNLSRLYTVLKAHISSQNSELSSAALQALGFCLYNPRITSGLSEANIQELLLTLNGIIKSSDKNVCTRALWVISKQTFPAELVSKMVSSIIDSLEVILSKGEIHSAVVDFEALNVIIRLIEQAPVQMGEESVRWAKLVIPLVVHSAQKVHLRGATALEMGMPLLLQKQQEIALITEHLMTTKLISELQKLFKNKNETYVLKLWPLFVKLLGKTLHRSGSFINSLLQLEELGFRSGTPMIKKIAFIAWKSLIDNFALNPDILCSAKRLKLLMQPLSSIHVRTETLALTKLEVWWYLLMRLGPQLPANFEQVCVPLIQSTISVDSIPSPQGNSSRGSASPGLSPLTPGHKGASPYGSPRGNLSSNTGGMAAIPSIQLLGLEMMLHFLLGPEVLSFAKQHKIVLSLEPLEHPLISSPSFFSKYAHTLITAVHDSFVSVGKDASDAVVSAIWKELISLVKSVTEAGNRKEKSGSEVLTLLLKSLENIVKSEVFPVSKTLVLMEITVKGLPPKVLGSPAYQVANMDILNGTPALFLIQLIFNNNLLECGVEDEKFFLNLETLVGCVLSGPTSPLAFSDSVLTVINQNAKQLVNKEHLWRMWSMIVSPLTDVIHQTNEVNQGDALEHNFSAIYGALTLPINHIFSAQTFPTGTMKALLKTWSELYRAFTRCASLVATAEENLCCEELSSKIMCSLEDEVLSDLLFLDRISHIIIVMVDCIDFSPYNKKYQPKIKSPQRSSDWSRKKKEPLGKLASLFKLIVKVIDTFHTLSLKETFSDTLLAIGNSIISMLSNVFGHISLPSMIREIFATFTRPLALLYENSKLDEAPKVYTSLNNKLEKLLGEIVACLQFSYLGAYDSELLEHLSPLLCVIFLHKNKQIRKQSALLWNATFAKATALVYPEELKPILRQAKQKILLLLPGLENVEMMDESSEPYSESTENSQLNVKISGMERKSSGKRDSILAHTKDKKKKVKLSAKLKLESSSPKIKSGKLLEEEKSTDFVFIPPEGKETKARVLTEHQKEVLKTKRCDIPALYNNLDASQDTLFSAQFSQEESMESLTLTEKPKEDAKIIKEEQMESTIFIHQDAPENCGIDEHSENASLPNCGGSVAETNPETLITGFDARKEVLISSKILSAESSSSTETSVVSSSSVSNATFSGTPPQPTSRRQTFITLEKFDGSETRPFSPSPLNNISSTVTVRNNQDNTTNTDMPPKARKREVTNSKSDSENLANAGKKSSRRWSKAEQSVTKKSKPSLTSEQEEHSSENNSPDLLSPTEHVSENDDHPSEATLEHKDGDPKPAVENASLEDLTTEEKNVGINMESKESTASVVARTEQIVNEDSQAAALAPNPKTLRRSSRRRSEAVDSCSDSQERESGQQKKERRKEEEKIISKSPLRIKDDKLPTQKLTDESPIQENLTEKGNTLPERTSGEPSVNAEIDQNRRKPDLENVSSEGGGGTLDNLDKSSEKPLRGRTRYQTRRASQGLISAVENSESDSSEAKEEVSRKKRSGKWKNRSSDSVDIEEQEEKKAEEEVMKTANQTLDGQAVPDVDVNAAAQVCEKSTNNNRVILQDSAGPADSLQAPPKGEEKSKINKCVDSSFVSLPVPESNLRTRNASKRLLYKQDNDSNVRVSDSSLSPEKFTQVECQHKRSRRVRRSKSCDCCGEKSQSQEKSFIGLKNTESYAIKSVEKKKTDLQVPETAPETREARDHAETKLAGEEPLVNFHVGLKEENCTTGDSVKSEAELQEASLPPEIVTVKEKTYDTDASEAVSEIQGPCSENHSPAEDPGLSECKDISQKQLSENGELDISDVGKACKVIAGSSPEGVETMELNVRNDAFVAADSEKSTQMDVSVDVATEEDNKKDECEAVTTEVNVEGVATEDFNSGMDLSDTPIPVSKDVETEHAASGEIEGESNESDSGSCEEMNKEMGSHKAQMSTEIDSARVKETDILASASKSEEALIGRLDVNTQSFVSDIEMSSGERTVNCKTETSIELNKLDEAKLSGNEATVGNDTLQEVCFTSEKVEKLPQCLLVQVASELGAESNTTSPEKLELDSFGSVNESPSGMQQARCVWSPLASPSTSILKRGLKRSQEDEISPVNKIRRVSFADPIYQAGLADDIDRRCSVVRSHSSNSSPIIKSVKTSPTSHSKHNTTSAKGFLSPGSQSSKFKSPKKCLITEMAQESMLSPTESVYPALVNCAASVDIILPQITSNMWARGLGQLIRAKNIKTIGDLSTLTASEIKTLPIRSPKVFNVKKALRVYHEQQMKSRGLEEIPIFDISEKAVNGVESRTVSTDEERFASDLIEPVTLDTPLSKNLVAQISALALQLDSEDLYSYTGSQLFEMHEKLGTMANSIIRNLQSRWRSPAHENS</sequence>
<dbReference type="EMBL" id="AY428571">
    <property type="protein sequence ID" value="AAR87833.2"/>
    <property type="molecule type" value="mRNA"/>
</dbReference>
<dbReference type="EMBL" id="AY585206">
    <property type="protein sequence ID" value="AAS94124.1"/>
    <property type="molecule type" value="mRNA"/>
</dbReference>
<dbReference type="EMBL" id="AK017618">
    <property type="protein sequence ID" value="BAB30843.1"/>
    <property type="status" value="ALT_INIT"/>
    <property type="molecule type" value="mRNA"/>
</dbReference>
<dbReference type="EMBL" id="AK083291">
    <property type="protein sequence ID" value="BAC38846.1"/>
    <property type="status" value="ALT_SEQ"/>
    <property type="molecule type" value="mRNA"/>
</dbReference>
<dbReference type="EMBL" id="AK088688">
    <property type="protein sequence ID" value="BAC40506.1"/>
    <property type="status" value="ALT_SEQ"/>
    <property type="molecule type" value="mRNA"/>
</dbReference>
<dbReference type="EMBL" id="BC055320">
    <property type="protein sequence ID" value="AAH55320.1"/>
    <property type="molecule type" value="mRNA"/>
</dbReference>
<dbReference type="CCDS" id="CCDS50583.1">
    <molecule id="Q6PR54-3"/>
</dbReference>
<dbReference type="RefSeq" id="NP_001342343.1">
    <molecule id="Q6PR54-3"/>
    <property type="nucleotide sequence ID" value="NM_001355414.1"/>
</dbReference>
<dbReference type="RefSeq" id="NP_001342344.1">
    <molecule id="Q6PR54-1"/>
    <property type="nucleotide sequence ID" value="NM_001355415.1"/>
</dbReference>
<dbReference type="RefSeq" id="NP_780447.4">
    <molecule id="Q6PR54-3"/>
    <property type="nucleotide sequence ID" value="NM_175238.5"/>
</dbReference>
<dbReference type="RefSeq" id="XP_006498240.1">
    <property type="nucleotide sequence ID" value="XM_006498177.2"/>
</dbReference>
<dbReference type="RefSeq" id="XP_011237438.1">
    <molecule id="Q6PR54-2"/>
    <property type="nucleotide sequence ID" value="XM_011239136.3"/>
</dbReference>
<dbReference type="BioGRID" id="206234">
    <property type="interactions" value="17"/>
</dbReference>
<dbReference type="DIP" id="DIP-54907N"/>
<dbReference type="FunCoup" id="Q6PR54">
    <property type="interactions" value="4008"/>
</dbReference>
<dbReference type="IntAct" id="Q6PR54">
    <property type="interactions" value="7"/>
</dbReference>
<dbReference type="MINT" id="Q6PR54"/>
<dbReference type="STRING" id="10090.ENSMUSP00000108313"/>
<dbReference type="GlyGen" id="Q6PR54">
    <property type="glycosylation" value="1 site"/>
</dbReference>
<dbReference type="iPTMnet" id="Q6PR54"/>
<dbReference type="PhosphoSitePlus" id="Q6PR54"/>
<dbReference type="SwissPalm" id="Q6PR54"/>
<dbReference type="jPOST" id="Q6PR54"/>
<dbReference type="PaxDb" id="10090-ENSMUSP00000108313"/>
<dbReference type="PeptideAtlas" id="Q6PR54"/>
<dbReference type="ProteomicsDB" id="253284">
    <molecule id="Q6PR54-1"/>
</dbReference>
<dbReference type="ProteomicsDB" id="253285">
    <molecule id="Q6PR54-2"/>
</dbReference>
<dbReference type="ProteomicsDB" id="253286">
    <molecule id="Q6PR54-3"/>
</dbReference>
<dbReference type="Pumba" id="Q6PR54"/>
<dbReference type="Antibodypedia" id="33653">
    <property type="antibodies" value="135 antibodies from 28 providers"/>
</dbReference>
<dbReference type="DNASU" id="51869"/>
<dbReference type="Ensembl" id="ENSMUST00000112693.10">
    <molecule id="Q6PR54-3"/>
    <property type="protein sequence ID" value="ENSMUSP00000108313.3"/>
    <property type="gene ID" value="ENSMUSG00000036202.17"/>
</dbReference>
<dbReference type="GeneID" id="51869"/>
<dbReference type="KEGG" id="mmu:51869"/>
<dbReference type="UCSC" id="uc008jqq.1">
    <molecule id="Q6PR54-3"/>
    <property type="organism name" value="mouse"/>
</dbReference>
<dbReference type="UCSC" id="uc008jqr.1">
    <molecule id="Q6PR54-1"/>
    <property type="organism name" value="mouse"/>
</dbReference>
<dbReference type="UCSC" id="uc008jqt.1">
    <molecule id="Q6PR54-2"/>
    <property type="organism name" value="mouse"/>
</dbReference>
<dbReference type="AGR" id="MGI:1098622"/>
<dbReference type="CTD" id="55183"/>
<dbReference type="MGI" id="MGI:1098622">
    <property type="gene designation" value="Rif1"/>
</dbReference>
<dbReference type="VEuPathDB" id="HostDB:ENSMUSG00000036202"/>
<dbReference type="eggNOG" id="ENOG502QV6C">
    <property type="taxonomic scope" value="Eukaryota"/>
</dbReference>
<dbReference type="GeneTree" id="ENSGT00390000012204"/>
<dbReference type="HOGENOM" id="CLU_000989_0_0_1"/>
<dbReference type="InParanoid" id="Q6PR54"/>
<dbReference type="OMA" id="NMRSTDY"/>
<dbReference type="TreeFam" id="TF323789"/>
<dbReference type="Reactome" id="R-MMU-5693571">
    <property type="pathway name" value="Nonhomologous End-Joining (NHEJ)"/>
</dbReference>
<dbReference type="BioGRID-ORCS" id="51869">
    <property type="hits" value="18 hits in 115 CRISPR screens"/>
</dbReference>
<dbReference type="ChiTaRS" id="Rif1">
    <property type="organism name" value="mouse"/>
</dbReference>
<dbReference type="PRO" id="PR:Q6PR54"/>
<dbReference type="Proteomes" id="UP000000589">
    <property type="component" value="Chromosome 2"/>
</dbReference>
<dbReference type="RNAct" id="Q6PR54">
    <property type="molecule type" value="protein"/>
</dbReference>
<dbReference type="Bgee" id="ENSMUSG00000036202">
    <property type="expression patterns" value="Expressed in spermatocyte and 262 other cell types or tissues"/>
</dbReference>
<dbReference type="ExpressionAtlas" id="Q6PR54">
    <property type="expression patterns" value="baseline and differential"/>
</dbReference>
<dbReference type="GO" id="GO:0000785">
    <property type="term" value="C:chromatin"/>
    <property type="evidence" value="ECO:0000315"/>
    <property type="project" value="BHF-UCL"/>
</dbReference>
<dbReference type="GO" id="GO:0000781">
    <property type="term" value="C:chromosome, telomeric region"/>
    <property type="evidence" value="ECO:0000314"/>
    <property type="project" value="MGI"/>
</dbReference>
<dbReference type="GO" id="GO:0140445">
    <property type="term" value="C:chromosome, telomeric repeat region"/>
    <property type="evidence" value="ECO:0000314"/>
    <property type="project" value="BHF-UCL"/>
</dbReference>
<dbReference type="GO" id="GO:0000793">
    <property type="term" value="C:condensed chromosome"/>
    <property type="evidence" value="ECO:0007669"/>
    <property type="project" value="Ensembl"/>
</dbReference>
<dbReference type="GO" id="GO:0005737">
    <property type="term" value="C:cytoplasm"/>
    <property type="evidence" value="ECO:0007669"/>
    <property type="project" value="UniProtKB-KW"/>
</dbReference>
<dbReference type="GO" id="GO:0001939">
    <property type="term" value="C:female pronucleus"/>
    <property type="evidence" value="ECO:0000314"/>
    <property type="project" value="MGI"/>
</dbReference>
<dbReference type="GO" id="GO:0001940">
    <property type="term" value="C:male pronucleus"/>
    <property type="evidence" value="ECO:0000314"/>
    <property type="project" value="MGI"/>
</dbReference>
<dbReference type="GO" id="GO:0031965">
    <property type="term" value="C:nuclear membrane"/>
    <property type="evidence" value="ECO:0007669"/>
    <property type="project" value="Ensembl"/>
</dbReference>
<dbReference type="GO" id="GO:0005654">
    <property type="term" value="C:nucleoplasm"/>
    <property type="evidence" value="ECO:0007669"/>
    <property type="project" value="Ensembl"/>
</dbReference>
<dbReference type="GO" id="GO:0005634">
    <property type="term" value="C:nucleus"/>
    <property type="evidence" value="ECO:0000314"/>
    <property type="project" value="MGI"/>
</dbReference>
<dbReference type="GO" id="GO:0005886">
    <property type="term" value="C:plasma membrane"/>
    <property type="evidence" value="ECO:0007669"/>
    <property type="project" value="Ensembl"/>
</dbReference>
<dbReference type="GO" id="GO:0035861">
    <property type="term" value="C:site of double-strand break"/>
    <property type="evidence" value="ECO:0000314"/>
    <property type="project" value="UniProtKB"/>
</dbReference>
<dbReference type="GO" id="GO:0051233">
    <property type="term" value="C:spindle midzone"/>
    <property type="evidence" value="ECO:0007669"/>
    <property type="project" value="Ensembl"/>
</dbReference>
<dbReference type="GO" id="GO:1990830">
    <property type="term" value="P:cellular response to leukemia inhibitory factor"/>
    <property type="evidence" value="ECO:0000270"/>
    <property type="project" value="MGI"/>
</dbReference>
<dbReference type="GO" id="GO:0006974">
    <property type="term" value="P:DNA damage response"/>
    <property type="evidence" value="ECO:0000250"/>
    <property type="project" value="UniProtKB"/>
</dbReference>
<dbReference type="GO" id="GO:0006281">
    <property type="term" value="P:DNA repair"/>
    <property type="evidence" value="ECO:0007669"/>
    <property type="project" value="UniProtKB-KW"/>
</dbReference>
<dbReference type="GO" id="GO:2000042">
    <property type="term" value="P:negative regulation of double-strand break repair via homologous recombination"/>
    <property type="evidence" value="ECO:0000315"/>
    <property type="project" value="UniProtKB"/>
</dbReference>
<dbReference type="GO" id="GO:0045814">
    <property type="term" value="P:negative regulation of gene expression, epigenetic"/>
    <property type="evidence" value="ECO:0000314"/>
    <property type="project" value="BHF-UCL"/>
</dbReference>
<dbReference type="GO" id="GO:0000122">
    <property type="term" value="P:negative regulation of transcription by RNA polymerase II"/>
    <property type="evidence" value="ECO:0000315"/>
    <property type="project" value="BHF-UCL"/>
</dbReference>
<dbReference type="GO" id="GO:2001034">
    <property type="term" value="P:positive regulation of double-strand break repair via nonhomologous end joining"/>
    <property type="evidence" value="ECO:0000315"/>
    <property type="project" value="UniProtKB"/>
</dbReference>
<dbReference type="GO" id="GO:0045830">
    <property type="term" value="P:positive regulation of isotype switching"/>
    <property type="evidence" value="ECO:0000315"/>
    <property type="project" value="UniProtKB"/>
</dbReference>
<dbReference type="GO" id="GO:0035019">
    <property type="term" value="P:somatic stem cell population maintenance"/>
    <property type="evidence" value="ECO:0000315"/>
    <property type="project" value="MGI"/>
</dbReference>
<dbReference type="GO" id="GO:0031509">
    <property type="term" value="P:subtelomeric heterochromatin formation"/>
    <property type="evidence" value="ECO:0000315"/>
    <property type="project" value="BHF-UCL"/>
</dbReference>
<dbReference type="GO" id="GO:0000723">
    <property type="term" value="P:telomere maintenance"/>
    <property type="evidence" value="ECO:0000315"/>
    <property type="project" value="BHF-UCL"/>
</dbReference>
<dbReference type="GO" id="GO:0043247">
    <property type="term" value="P:telomere maintenance in response to DNA damage"/>
    <property type="evidence" value="ECO:0007669"/>
    <property type="project" value="Ensembl"/>
</dbReference>
<dbReference type="CDD" id="cd14267">
    <property type="entry name" value="Rif1_CTD_C-II_like"/>
    <property type="match status" value="1"/>
</dbReference>
<dbReference type="FunFam" id="1.25.10.10:FF:000255">
    <property type="entry name" value="Telomere-associated protein RIF1 isoform 1"/>
    <property type="match status" value="1"/>
</dbReference>
<dbReference type="InterPro" id="IPR016024">
    <property type="entry name" value="ARM-type_fold"/>
</dbReference>
<dbReference type="InterPro" id="IPR022031">
    <property type="entry name" value="Rif1_N"/>
</dbReference>
<dbReference type="PANTHER" id="PTHR22928">
    <property type="entry name" value="TELOMERE-ASSOCIATED PROTEIN RIF1"/>
    <property type="match status" value="1"/>
</dbReference>
<dbReference type="PANTHER" id="PTHR22928:SF3">
    <property type="entry name" value="TELOMERE-ASSOCIATED PROTEIN RIF1"/>
    <property type="match status" value="1"/>
</dbReference>
<dbReference type="Pfam" id="PF12231">
    <property type="entry name" value="Rif1_N"/>
    <property type="match status" value="1"/>
</dbReference>
<dbReference type="SUPFAM" id="SSF48371">
    <property type="entry name" value="ARM repeat"/>
    <property type="match status" value="1"/>
</dbReference>
<organism>
    <name type="scientific">Mus musculus</name>
    <name type="common">Mouse</name>
    <dbReference type="NCBI Taxonomy" id="10090"/>
    <lineage>
        <taxon>Eukaryota</taxon>
        <taxon>Metazoa</taxon>
        <taxon>Chordata</taxon>
        <taxon>Craniata</taxon>
        <taxon>Vertebrata</taxon>
        <taxon>Euteleostomi</taxon>
        <taxon>Mammalia</taxon>
        <taxon>Eutheria</taxon>
        <taxon>Euarchontoglires</taxon>
        <taxon>Glires</taxon>
        <taxon>Rodentia</taxon>
        <taxon>Myomorpha</taxon>
        <taxon>Muroidea</taxon>
        <taxon>Muridae</taxon>
        <taxon>Murinae</taxon>
        <taxon>Mus</taxon>
        <taxon>Mus</taxon>
    </lineage>
</organism>
<name>RIF1_MOUSE</name>
<feature type="chain" id="PRO_0000097334" description="Telomere-associated protein RIF1">
    <location>
        <begin position="1"/>
        <end position="2419"/>
    </location>
</feature>
<feature type="region of interest" description="Disordered" evidence="3">
    <location>
        <begin position="1"/>
        <end position="24"/>
    </location>
</feature>
<feature type="region of interest" description="Disordered" evidence="3">
    <location>
        <begin position="373"/>
        <end position="408"/>
    </location>
</feature>
<feature type="region of interest" description="Disordered" evidence="3">
    <location>
        <begin position="1184"/>
        <end position="1594"/>
    </location>
</feature>
<feature type="region of interest" description="Disordered" evidence="3">
    <location>
        <begin position="1613"/>
        <end position="1637"/>
    </location>
</feature>
<feature type="region of interest" description="Disordered" evidence="3">
    <location>
        <begin position="1812"/>
        <end position="1836"/>
    </location>
</feature>
<feature type="region of interest" description="Interaction with condensed chromosomes in telophase" evidence="1">
    <location>
        <begin position="1882"/>
        <end position="2419"/>
    </location>
</feature>
<feature type="region of interest" description="Disordered" evidence="3">
    <location>
        <begin position="1890"/>
        <end position="1914"/>
    </location>
</feature>
<feature type="region of interest" description="Disordered" evidence="3">
    <location>
        <begin position="1929"/>
        <end position="1983"/>
    </location>
</feature>
<feature type="region of interest" description="Interaction with ERCC6" evidence="2">
    <location>
        <begin position="2119"/>
        <end position="2394"/>
    </location>
</feature>
<feature type="region of interest" description="Disordered" evidence="3">
    <location>
        <begin position="2182"/>
        <end position="2212"/>
    </location>
</feature>
<feature type="compositionally biased region" description="Polar residues" evidence="3">
    <location>
        <begin position="373"/>
        <end position="385"/>
    </location>
</feature>
<feature type="compositionally biased region" description="Low complexity" evidence="3">
    <location>
        <begin position="1184"/>
        <end position="1198"/>
    </location>
</feature>
<feature type="compositionally biased region" description="Polar residues" evidence="3">
    <location>
        <begin position="1199"/>
        <end position="1217"/>
    </location>
</feature>
<feature type="compositionally biased region" description="Polar residues" evidence="3">
    <location>
        <begin position="1228"/>
        <end position="1255"/>
    </location>
</feature>
<feature type="compositionally biased region" description="Basic and acidic residues" evidence="3">
    <location>
        <begin position="1263"/>
        <end position="1272"/>
    </location>
</feature>
<feature type="compositionally biased region" description="Polar residues" evidence="3">
    <location>
        <begin position="1289"/>
        <end position="1302"/>
    </location>
</feature>
<feature type="compositionally biased region" description="Basic and acidic residues" evidence="3">
    <location>
        <begin position="1323"/>
        <end position="1345"/>
    </location>
</feature>
<feature type="compositionally biased region" description="Basic and acidic residues" evidence="3">
    <location>
        <begin position="1416"/>
        <end position="1455"/>
    </location>
</feature>
<feature type="compositionally biased region" description="Polar residues" evidence="3">
    <location>
        <begin position="1457"/>
        <end position="1467"/>
    </location>
</feature>
<feature type="compositionally biased region" description="Basic and acidic residues" evidence="3">
    <location>
        <begin position="1507"/>
        <end position="1516"/>
    </location>
</feature>
<feature type="compositionally biased region" description="Polar residues" evidence="3">
    <location>
        <begin position="1525"/>
        <end position="1537"/>
    </location>
</feature>
<feature type="compositionally biased region" description="Basic residues" evidence="3">
    <location>
        <begin position="1551"/>
        <end position="1560"/>
    </location>
</feature>
<feature type="compositionally biased region" description="Basic and acidic residues" evidence="3">
    <location>
        <begin position="1572"/>
        <end position="1581"/>
    </location>
</feature>
<feature type="compositionally biased region" description="Polar residues" evidence="3">
    <location>
        <begin position="2189"/>
        <end position="2212"/>
    </location>
</feature>
<feature type="modified residue" description="Phosphoserine" evidence="14">
    <location>
        <position position="385"/>
    </location>
</feature>
<feature type="modified residue" description="Phosphoserine" evidence="14">
    <location>
        <position position="391"/>
    </location>
</feature>
<feature type="modified residue" description="Phosphoserine" evidence="2">
    <location>
        <position position="779"/>
    </location>
</feature>
<feature type="modified residue" description="Phosphoserine" evidence="2">
    <location>
        <position position="976"/>
    </location>
</feature>
<feature type="modified residue" description="Phosphoserine" evidence="2">
    <location>
        <position position="1005"/>
    </location>
</feature>
<feature type="modified residue" description="Phosphothreonine" evidence="2">
    <location>
        <position position="1044"/>
    </location>
</feature>
<feature type="modified residue" description="Phosphothreonine" evidence="2">
    <location>
        <position position="1215"/>
    </location>
</feature>
<feature type="modified residue" description="Phosphoserine" evidence="2">
    <location>
        <position position="1231"/>
    </location>
</feature>
<feature type="modified residue" description="Phosphoserine" evidence="2">
    <location>
        <position position="1233"/>
    </location>
</feature>
<feature type="modified residue" description="Phosphoserine" evidence="14">
    <location>
        <position position="1407"/>
    </location>
</feature>
<feature type="modified residue" description="Phosphoserine" evidence="2">
    <location>
        <position position="1439"/>
    </location>
</feature>
<feature type="modified residue" description="Phosphoserine" evidence="14">
    <location>
        <position position="1457"/>
    </location>
</feature>
<feature type="modified residue" description="Phosphoserine" evidence="2">
    <location>
        <position position="1498"/>
    </location>
</feature>
<feature type="modified residue" description="Phosphothreonine" evidence="2">
    <location>
        <position position="1504"/>
    </location>
</feature>
<feature type="modified residue" description="Phosphoserine" evidence="14">
    <location>
        <position position="1528"/>
    </location>
</feature>
<feature type="modified residue" description="Phosphoserine" evidence="14">
    <location>
        <position position="1538"/>
    </location>
</feature>
<feature type="modified residue" description="Phosphoserine" evidence="14">
    <location>
        <position position="1540"/>
    </location>
</feature>
<feature type="modified residue" description="Phosphoserine" evidence="2">
    <location>
        <position position="1542"/>
    </location>
</feature>
<feature type="modified residue" description="Phosphoserine" evidence="14">
    <location>
        <position position="1550"/>
    </location>
</feature>
<feature type="modified residue" description="Phosphoserine" evidence="2">
    <location>
        <position position="1562"/>
    </location>
</feature>
<feature type="modified residue" description="Phosphoserine" evidence="14">
    <location>
        <position position="1565"/>
    </location>
</feature>
<feature type="modified residue" description="Phosphoserine" evidence="2">
    <location>
        <position position="1680"/>
    </location>
</feature>
<feature type="modified residue" description="Phosphoserine" evidence="14">
    <location>
        <position position="1683"/>
    </location>
</feature>
<feature type="modified residue" description="Phosphothreonine" evidence="2">
    <location>
        <position position="1780"/>
    </location>
</feature>
<feature type="modified residue" description="Phosphoserine" evidence="2">
    <location>
        <position position="1784"/>
    </location>
</feature>
<feature type="modified residue" description="Phosphoserine" evidence="2">
    <location>
        <position position="1842"/>
    </location>
</feature>
<feature type="modified residue" description="Phosphoserine" evidence="2">
    <location>
        <position position="1931"/>
    </location>
</feature>
<feature type="modified residue" description="Phosphoserine" evidence="2">
    <location>
        <position position="2094"/>
    </location>
</feature>
<feature type="modified residue" description="Phosphoserine" evidence="2">
    <location>
        <position position="2109"/>
    </location>
</feature>
<feature type="modified residue" description="Phosphoserine" evidence="2">
    <location>
        <position position="2121"/>
    </location>
</feature>
<feature type="modified residue" description="Phosphoserine" evidence="2">
    <location>
        <position position="2125"/>
    </location>
</feature>
<feature type="modified residue" description="Phosphoserine" evidence="14">
    <location>
        <position position="2144"/>
    </location>
</feature>
<feature type="modified residue" description="Phosphoserine" evidence="2">
    <location>
        <position position="2153"/>
    </location>
</feature>
<feature type="modified residue" description="Phosphoserine" evidence="2">
    <location>
        <position position="2208"/>
    </location>
</feature>
<feature type="modified residue" description="Phosphoserine" evidence="2">
    <location>
        <position position="2287"/>
    </location>
</feature>
<feature type="modified residue" description="Phosphoserine" evidence="2">
    <location>
        <position position="2341"/>
    </location>
</feature>
<feature type="modified residue" description="Phosphoserine" evidence="2">
    <location>
        <position position="2413"/>
    </location>
</feature>
<feature type="modified residue" description="Phosphoserine" evidence="2">
    <location>
        <position position="2419"/>
    </location>
</feature>
<feature type="splice variant" id="VSP_014432" description="In isoform 3." evidence="10">
    <original>I</original>
    <variation>ISHWFLHC</variation>
    <location>
        <position position="167"/>
    </location>
</feature>
<feature type="splice variant" id="VSP_014433" description="In isoform 2." evidence="11">
    <location>
        <begin position="2198"/>
        <end position="2223"/>
    </location>
</feature>
<feature type="sequence conflict" description="In Ref. 1; AAR87833." evidence="11" ref="1">
    <original>M</original>
    <variation>V</variation>
    <location>
        <position position="211"/>
    </location>
</feature>
<feature type="sequence conflict" description="In Ref. 1; AAR87833." evidence="11" ref="1">
    <original>M</original>
    <variation>V</variation>
    <location>
        <position position="548"/>
    </location>
</feature>
<feature type="sequence conflict" description="In Ref. 1; AAR87833 and 3; BAC40506." evidence="11" ref="1 3">
    <original>F</original>
    <variation>L</variation>
    <location>
        <position position="586"/>
    </location>
</feature>
<feature type="sequence conflict" description="In Ref. 1; AAR87833 and 3; BAC40506." evidence="11" ref="1 3">
    <original>E</original>
    <variation>G</variation>
    <location>
        <position position="592"/>
    </location>
</feature>
<feature type="sequence conflict" description="In Ref. 1; AAR87833 and 3; BAC40506." evidence="11" ref="1 3">
    <original>E</original>
    <variation>G</variation>
    <location>
        <position position="596"/>
    </location>
</feature>
<feature type="sequence conflict" description="In Ref. 1; AAR87833 and 3; BAC40506." evidence="11" ref="1 3">
    <original>S</original>
    <variation>A</variation>
    <location>
        <position position="717"/>
    </location>
</feature>
<feature type="sequence conflict" description="In Ref. 1; AAR87833 and 3; BAC40506." evidence="11" ref="1 3">
    <original>V</original>
    <variation>A</variation>
    <location>
        <position position="743"/>
    </location>
</feature>
<feature type="sequence conflict" description="In Ref. 3; BAC40506." evidence="11" ref="3">
    <original>K</original>
    <variation>E</variation>
    <location>
        <position position="802"/>
    </location>
</feature>
<feature type="sequence conflict" description="In Ref. 1; AAR87833 and 3; BAC40506." evidence="11" ref="1 3">
    <original>I</original>
    <variation>S</variation>
    <location>
        <position position="959"/>
    </location>
</feature>
<feature type="sequence conflict" description="In Ref. 3; BAB30843." evidence="11" ref="3">
    <original>K</original>
    <variation>R</variation>
    <location>
        <position position="1066"/>
    </location>
</feature>
<feature type="sequence conflict" description="In Ref. 1; AAR87833." evidence="11" ref="1">
    <original>M</original>
    <variation>T</variation>
    <location>
        <position position="1122"/>
    </location>
</feature>
<feature type="sequence conflict" description="In Ref. 1; AAR87833." evidence="11" ref="1">
    <original>L</original>
    <variation>M</variation>
    <location>
        <position position="1179"/>
    </location>
</feature>
<feature type="sequence conflict" description="In Ref. 1; AAR87833." evidence="11" ref="1">
    <original>I</original>
    <variation>M</variation>
    <location>
        <position position="1238"/>
    </location>
</feature>
<feature type="sequence conflict" description="In Ref. 3; BAB30843." evidence="11" ref="3">
    <original>A</original>
    <variation>R</variation>
    <location>
        <position position="1527"/>
    </location>
</feature>
<feature type="sequence conflict" description="In Ref. 1; AAR87833." evidence="11" ref="1">
    <original>A</original>
    <variation>S</variation>
    <location>
        <position position="1584"/>
    </location>
</feature>
<feature type="sequence conflict" description="In Ref. 1; AAR87833." evidence="11" ref="1">
    <original>N</original>
    <variation>T</variation>
    <location>
        <position position="1671"/>
    </location>
</feature>
<feature type="sequence conflict" description="In Ref. 1; AAR87833." evidence="11" ref="1">
    <original>V</original>
    <variation>L</variation>
    <location>
        <position position="1772"/>
    </location>
</feature>
<feature type="sequence conflict" description="In Ref. 1; AAR87833." evidence="11" ref="1">
    <original>P</original>
    <variation>S</variation>
    <location>
        <position position="1798"/>
    </location>
</feature>
<feature type="sequence conflict" description="In Ref. 1; AAR87833." evidence="11" ref="1">
    <original>V</original>
    <variation>I</variation>
    <location>
        <position position="1897"/>
    </location>
</feature>
<feature type="sequence conflict" description="In Ref. 1; AAR87833." evidence="11" ref="1">
    <original>E</original>
    <variation>D</variation>
    <location>
        <position position="1918"/>
    </location>
</feature>
<feature type="sequence conflict" description="In Ref. 1; AAR87833." evidence="11" ref="1">
    <original>L</original>
    <variation>F</variation>
    <location>
        <position position="1997"/>
    </location>
</feature>
<feature type="sequence conflict" description="In Ref. 1; AAR87833." evidence="11" ref="1">
    <original>F</original>
    <variation>L</variation>
    <location>
        <position position="2018"/>
    </location>
</feature>
<feature type="sequence conflict" description="In Ref. 1; AAR87833." evidence="11" ref="1">
    <original>M</original>
    <variation>T</variation>
    <location>
        <position position="2024"/>
    </location>
</feature>
<feature type="sequence conflict" description="In Ref. 1; AAR87833." evidence="11" ref="1">
    <original>N</original>
    <variation>K</variation>
    <location>
        <position position="2052"/>
    </location>
</feature>
<feature type="sequence conflict" description="In Ref. 1; AAR87833." evidence="11" ref="1">
    <location>
        <position position="2114"/>
    </location>
</feature>
<feature type="sequence conflict" description="In Ref. 1; AAR87833." evidence="11" ref="1">
    <original>E</original>
    <variation>G</variation>
    <location>
        <position position="2394"/>
    </location>
</feature>
<accession>Q6PR54</accession>
<accession>Q6T8D9</accession>
<accession>Q7TPD8</accession>
<accession>Q8BTU2</accession>
<accession>Q8C408</accession>
<accession>Q9CS77</accession>
<reference key="1">
    <citation type="journal article" date="2004" name="Dev. Dyn.">
        <title>Identification and characterisation of mRif1: a mouse telomere-associated protein highly expressed in germ cells and embryo-derived pluripotent stem cells.</title>
        <authorList>
            <person name="Adams I.R."/>
            <person name="McLaren A."/>
        </authorList>
    </citation>
    <scope>NUCLEOTIDE SEQUENCE [MRNA] (ISOFORM 1)</scope>
    <scope>INTERACTION WITH TRF2</scope>
    <scope>SUBCELLULAR LOCATION</scope>
    <scope>TISSUE SPECIFICITY</scope>
    <scope>DEVELOPMENTAL STAGE</scope>
    <source>
        <strain>129/Sv</strain>
    </source>
</reference>
<reference key="2">
    <citation type="submission" date="2004-03" db="EMBL/GenBank/DDBJ databases">
        <title>ATM-mediated S-phase checkpoint function for hRif1.</title>
        <authorList>
            <person name="Silvermann J."/>
            <person name="Takai H."/>
            <person name="Buonomo S.B.C."/>
            <person name="Eisenhaber F."/>
            <person name="de Lange T."/>
        </authorList>
    </citation>
    <scope>NUCLEOTIDE SEQUENCE [MRNA] (ISOFORM 3)</scope>
</reference>
<reference key="3">
    <citation type="journal article" date="2005" name="Science">
        <title>The transcriptional landscape of the mammalian genome.</title>
        <authorList>
            <person name="Carninci P."/>
            <person name="Kasukawa T."/>
            <person name="Katayama S."/>
            <person name="Gough J."/>
            <person name="Frith M.C."/>
            <person name="Maeda N."/>
            <person name="Oyama R."/>
            <person name="Ravasi T."/>
            <person name="Lenhard B."/>
            <person name="Wells C."/>
            <person name="Kodzius R."/>
            <person name="Shimokawa K."/>
            <person name="Bajic V.B."/>
            <person name="Brenner S.E."/>
            <person name="Batalov S."/>
            <person name="Forrest A.R."/>
            <person name="Zavolan M."/>
            <person name="Davis M.J."/>
            <person name="Wilming L.G."/>
            <person name="Aidinis V."/>
            <person name="Allen J.E."/>
            <person name="Ambesi-Impiombato A."/>
            <person name="Apweiler R."/>
            <person name="Aturaliya R.N."/>
            <person name="Bailey T.L."/>
            <person name="Bansal M."/>
            <person name="Baxter L."/>
            <person name="Beisel K.W."/>
            <person name="Bersano T."/>
            <person name="Bono H."/>
            <person name="Chalk A.M."/>
            <person name="Chiu K.P."/>
            <person name="Choudhary V."/>
            <person name="Christoffels A."/>
            <person name="Clutterbuck D.R."/>
            <person name="Crowe M.L."/>
            <person name="Dalla E."/>
            <person name="Dalrymple B.P."/>
            <person name="de Bono B."/>
            <person name="Della Gatta G."/>
            <person name="di Bernardo D."/>
            <person name="Down T."/>
            <person name="Engstrom P."/>
            <person name="Fagiolini M."/>
            <person name="Faulkner G."/>
            <person name="Fletcher C.F."/>
            <person name="Fukushima T."/>
            <person name="Furuno M."/>
            <person name="Futaki S."/>
            <person name="Gariboldi M."/>
            <person name="Georgii-Hemming P."/>
            <person name="Gingeras T.R."/>
            <person name="Gojobori T."/>
            <person name="Green R.E."/>
            <person name="Gustincich S."/>
            <person name="Harbers M."/>
            <person name="Hayashi Y."/>
            <person name="Hensch T.K."/>
            <person name="Hirokawa N."/>
            <person name="Hill D."/>
            <person name="Huminiecki L."/>
            <person name="Iacono M."/>
            <person name="Ikeo K."/>
            <person name="Iwama A."/>
            <person name="Ishikawa T."/>
            <person name="Jakt M."/>
            <person name="Kanapin A."/>
            <person name="Katoh M."/>
            <person name="Kawasawa Y."/>
            <person name="Kelso J."/>
            <person name="Kitamura H."/>
            <person name="Kitano H."/>
            <person name="Kollias G."/>
            <person name="Krishnan S.P."/>
            <person name="Kruger A."/>
            <person name="Kummerfeld S.K."/>
            <person name="Kurochkin I.V."/>
            <person name="Lareau L.F."/>
            <person name="Lazarevic D."/>
            <person name="Lipovich L."/>
            <person name="Liu J."/>
            <person name="Liuni S."/>
            <person name="McWilliam S."/>
            <person name="Madan Babu M."/>
            <person name="Madera M."/>
            <person name="Marchionni L."/>
            <person name="Matsuda H."/>
            <person name="Matsuzawa S."/>
            <person name="Miki H."/>
            <person name="Mignone F."/>
            <person name="Miyake S."/>
            <person name="Morris K."/>
            <person name="Mottagui-Tabar S."/>
            <person name="Mulder N."/>
            <person name="Nakano N."/>
            <person name="Nakauchi H."/>
            <person name="Ng P."/>
            <person name="Nilsson R."/>
            <person name="Nishiguchi S."/>
            <person name="Nishikawa S."/>
            <person name="Nori F."/>
            <person name="Ohara O."/>
            <person name="Okazaki Y."/>
            <person name="Orlando V."/>
            <person name="Pang K.C."/>
            <person name="Pavan W.J."/>
            <person name="Pavesi G."/>
            <person name="Pesole G."/>
            <person name="Petrovsky N."/>
            <person name="Piazza S."/>
            <person name="Reed J."/>
            <person name="Reid J.F."/>
            <person name="Ring B.Z."/>
            <person name="Ringwald M."/>
            <person name="Rost B."/>
            <person name="Ruan Y."/>
            <person name="Salzberg S.L."/>
            <person name="Sandelin A."/>
            <person name="Schneider C."/>
            <person name="Schoenbach C."/>
            <person name="Sekiguchi K."/>
            <person name="Semple C.A."/>
            <person name="Seno S."/>
            <person name="Sessa L."/>
            <person name="Sheng Y."/>
            <person name="Shibata Y."/>
            <person name="Shimada H."/>
            <person name="Shimada K."/>
            <person name="Silva D."/>
            <person name="Sinclair B."/>
            <person name="Sperling S."/>
            <person name="Stupka E."/>
            <person name="Sugiura K."/>
            <person name="Sultana R."/>
            <person name="Takenaka Y."/>
            <person name="Taki K."/>
            <person name="Tammoja K."/>
            <person name="Tan S.L."/>
            <person name="Tang S."/>
            <person name="Taylor M.S."/>
            <person name="Tegner J."/>
            <person name="Teichmann S.A."/>
            <person name="Ueda H.R."/>
            <person name="van Nimwegen E."/>
            <person name="Verardo R."/>
            <person name="Wei C.L."/>
            <person name="Yagi K."/>
            <person name="Yamanishi H."/>
            <person name="Zabarovsky E."/>
            <person name="Zhu S."/>
            <person name="Zimmer A."/>
            <person name="Hide W."/>
            <person name="Bult C."/>
            <person name="Grimmond S.M."/>
            <person name="Teasdale R.D."/>
            <person name="Liu E.T."/>
            <person name="Brusic V."/>
            <person name="Quackenbush J."/>
            <person name="Wahlestedt C."/>
            <person name="Mattick J.S."/>
            <person name="Hume D.A."/>
            <person name="Kai C."/>
            <person name="Sasaki D."/>
            <person name="Tomaru Y."/>
            <person name="Fukuda S."/>
            <person name="Kanamori-Katayama M."/>
            <person name="Suzuki M."/>
            <person name="Aoki J."/>
            <person name="Arakawa T."/>
            <person name="Iida J."/>
            <person name="Imamura K."/>
            <person name="Itoh M."/>
            <person name="Kato T."/>
            <person name="Kawaji H."/>
            <person name="Kawagashira N."/>
            <person name="Kawashima T."/>
            <person name="Kojima M."/>
            <person name="Kondo S."/>
            <person name="Konno H."/>
            <person name="Nakano K."/>
            <person name="Ninomiya N."/>
            <person name="Nishio T."/>
            <person name="Okada M."/>
            <person name="Plessy C."/>
            <person name="Shibata K."/>
            <person name="Shiraki T."/>
            <person name="Suzuki S."/>
            <person name="Tagami M."/>
            <person name="Waki K."/>
            <person name="Watahiki A."/>
            <person name="Okamura-Oho Y."/>
            <person name="Suzuki H."/>
            <person name="Kawai J."/>
            <person name="Hayashizaki Y."/>
        </authorList>
    </citation>
    <scope>NUCLEOTIDE SEQUENCE [LARGE SCALE MRNA] OF 416-1011; 1061-1556 AND 1859-2419</scope>
    <source>
        <strain>C57BL/6J</strain>
        <tissue>Liver</tissue>
        <tissue>Thymus</tissue>
    </source>
</reference>
<reference key="4">
    <citation type="journal article" date="2004" name="Genome Res.">
        <title>The status, quality, and expansion of the NIH full-length cDNA project: the Mammalian Gene Collection (MGC).</title>
        <authorList>
            <consortium name="The MGC Project Team"/>
        </authorList>
    </citation>
    <scope>NUCLEOTIDE SEQUENCE [LARGE SCALE MRNA] OF 1860-2419</scope>
    <source>
        <strain>C57BL/6J</strain>
        <tissue>Brain</tissue>
    </source>
</reference>
<reference key="5">
    <citation type="journal article" date="2010" name="Cell">
        <title>A tissue-specific atlas of mouse protein phosphorylation and expression.</title>
        <authorList>
            <person name="Huttlin E.L."/>
            <person name="Jedrychowski M.P."/>
            <person name="Elias J.E."/>
            <person name="Goswami T."/>
            <person name="Rad R."/>
            <person name="Beausoleil S.A."/>
            <person name="Villen J."/>
            <person name="Haas W."/>
            <person name="Sowa M.E."/>
            <person name="Gygi S.P."/>
        </authorList>
    </citation>
    <scope>PHOSPHORYLATION [LARGE SCALE ANALYSIS] AT SER-385; SER-391; SER-1407; SER-1457; SER-1528; SER-1538; SER-1540; SER-1550; SER-1565; SER-1683 AND SER-2144</scope>
    <scope>IDENTIFICATION BY MASS SPECTROMETRY [LARGE SCALE ANALYSIS]</scope>
    <source>
        <tissue>Brain</tissue>
        <tissue>Lung</tissue>
        <tissue>Spleen</tissue>
        <tissue>Testis</tissue>
    </source>
</reference>
<reference key="6">
    <citation type="journal article" date="2013" name="Mol. Cell">
        <title>RIF1 is essential for 53BP1-dependent nonhomologous end joining and suppression of DNA double-strand break resection.</title>
        <authorList>
            <person name="Chapman J.R."/>
            <person name="Barral P."/>
            <person name="Vannier J.B."/>
            <person name="Borel V."/>
            <person name="Steger M."/>
            <person name="Tomas-Loba A."/>
            <person name="Sartori A.A."/>
            <person name="Adams I.R."/>
            <person name="Batista F.D."/>
            <person name="Boulton S.J."/>
        </authorList>
    </citation>
    <scope>FUNCTION</scope>
    <scope>SUBCELLULAR LOCATION</scope>
    <scope>DISRUPTION PHENOTYPE</scope>
    <scope>INTERACTION WITH TP53BP1</scope>
</reference>
<reference key="7">
    <citation type="journal article" date="2013" name="Mol. Cell">
        <title>A cell cycle-dependent regulatory circuit composed of 53BP1-RIF1 and BRCA1-CtIP controls DNA repair pathway choice.</title>
        <authorList>
            <person name="Escribano-Diaz C."/>
            <person name="Orthwein A."/>
            <person name="Fradet-Turcotte A."/>
            <person name="Xing M."/>
            <person name="Young J.T."/>
            <person name="Tkac J."/>
            <person name="Cook M.A."/>
            <person name="Rosebrock A.P."/>
            <person name="Munro M."/>
            <person name="Canny M.D."/>
            <person name="Xu D."/>
            <person name="Durocher D."/>
        </authorList>
    </citation>
    <scope>FUNCTION</scope>
</reference>
<reference key="8">
    <citation type="journal article" date="2013" name="Science">
        <title>53BP1 regulates DSB repair using Rif1 to control 5' end resection.</title>
        <authorList>
            <person name="Zimmermann M."/>
            <person name="Lottersberger F."/>
            <person name="Buonomo S.B."/>
            <person name="Sfeir A."/>
            <person name="de Lange T."/>
        </authorList>
    </citation>
    <scope>FUNCTION</scope>
    <scope>SUBCELLULAR LOCATION</scope>
    <scope>INTERACTION WITH TP53BP1</scope>
</reference>
<reference key="9">
    <citation type="journal article" date="2013" name="Science">
        <title>Rif1 prevents resection of DNA breaks and promotes immunoglobulin class switching.</title>
        <authorList>
            <person name="Di Virgilio M."/>
            <person name="Callen E."/>
            <person name="Yamane A."/>
            <person name="Zhang W."/>
            <person name="Jankovic M."/>
            <person name="Gitlin A.D."/>
            <person name="Feldhahn N."/>
            <person name="Resch W."/>
            <person name="Oliveira T.Y."/>
            <person name="Chait B.T."/>
            <person name="Nussenzweig A."/>
            <person name="Casellas R."/>
            <person name="Robbiani D.F."/>
            <person name="Nussenzweig M.C."/>
        </authorList>
    </citation>
    <scope>FUNCTION</scope>
    <scope>SUBCELLULAR LOCATION</scope>
    <scope>INTERACTION WITH TP53BP1</scope>
</reference>
<keyword id="KW-0025">Alternative splicing</keyword>
<keyword id="KW-0131">Cell cycle</keyword>
<keyword id="KW-0158">Chromosome</keyword>
<keyword id="KW-0963">Cytoplasm</keyword>
<keyword id="KW-0206">Cytoskeleton</keyword>
<keyword id="KW-0227">DNA damage</keyword>
<keyword id="KW-0234">DNA repair</keyword>
<keyword id="KW-0539">Nucleus</keyword>
<keyword id="KW-0597">Phosphoprotein</keyword>
<keyword id="KW-1185">Reference proteome</keyword>
<keyword id="KW-0779">Telomere</keyword>
<gene>
    <name evidence="13" type="primary">Rif1</name>
</gene>
<evidence type="ECO:0000250" key="1"/>
<evidence type="ECO:0000250" key="2">
    <source>
        <dbReference type="UniProtKB" id="Q5UIP0"/>
    </source>
</evidence>
<evidence type="ECO:0000256" key="3">
    <source>
        <dbReference type="SAM" id="MobiDB-lite"/>
    </source>
</evidence>
<evidence type="ECO:0000269" key="4">
    <source>
    </source>
</evidence>
<evidence type="ECO:0000269" key="5">
    <source>
    </source>
</evidence>
<evidence type="ECO:0000269" key="6">
    <source>
    </source>
</evidence>
<evidence type="ECO:0000269" key="7">
    <source>
    </source>
</evidence>
<evidence type="ECO:0000269" key="8">
    <source>
    </source>
</evidence>
<evidence type="ECO:0000303" key="9">
    <source>
    </source>
</evidence>
<evidence type="ECO:0000303" key="10">
    <source ref="2"/>
</evidence>
<evidence type="ECO:0000305" key="11"/>
<evidence type="ECO:0000305" key="12">
    <source>
    </source>
</evidence>
<evidence type="ECO:0000312" key="13">
    <source>
        <dbReference type="MGI" id="MGI:1098622"/>
    </source>
</evidence>
<evidence type="ECO:0007744" key="14">
    <source>
    </source>
</evidence>